<protein>
    <recommendedName>
        <fullName evidence="1">Protein-L-isoaspartate O-methyltransferase</fullName>
        <ecNumber evidence="1">2.1.1.77</ecNumber>
    </recommendedName>
    <alternativeName>
        <fullName evidence="1">L-isoaspartyl protein carboxyl methyltransferase</fullName>
    </alternativeName>
    <alternativeName>
        <fullName evidence="1">Protein L-isoaspartyl methyltransferase</fullName>
    </alternativeName>
    <alternativeName>
        <fullName evidence="1">Protein-beta-aspartate methyltransferase</fullName>
        <shortName evidence="1">PIMT</shortName>
    </alternativeName>
</protein>
<name>PIMT_XANAC</name>
<comment type="function">
    <text evidence="1">Catalyzes the methyl esterification of L-isoaspartyl residues in peptides and proteins that result from spontaneous decomposition of normal L-aspartyl and L-asparaginyl residues. It plays a role in the repair and/or degradation of damaged proteins.</text>
</comment>
<comment type="catalytic activity">
    <reaction evidence="1">
        <text>[protein]-L-isoaspartate + S-adenosyl-L-methionine = [protein]-L-isoaspartate alpha-methyl ester + S-adenosyl-L-homocysteine</text>
        <dbReference type="Rhea" id="RHEA:12705"/>
        <dbReference type="Rhea" id="RHEA-COMP:12143"/>
        <dbReference type="Rhea" id="RHEA-COMP:12144"/>
        <dbReference type="ChEBI" id="CHEBI:57856"/>
        <dbReference type="ChEBI" id="CHEBI:59789"/>
        <dbReference type="ChEBI" id="CHEBI:90596"/>
        <dbReference type="ChEBI" id="CHEBI:90598"/>
        <dbReference type="EC" id="2.1.1.77"/>
    </reaction>
</comment>
<comment type="subcellular location">
    <subcellularLocation>
        <location evidence="1">Cytoplasm</location>
    </subcellularLocation>
</comment>
<comment type="similarity">
    <text evidence="1">Belongs to the methyltransferase superfamily. L-isoaspartyl/D-aspartyl protein methyltransferase family.</text>
</comment>
<gene>
    <name evidence="1" type="primary">pcm</name>
    <name type="ordered locus">XAC1726</name>
</gene>
<evidence type="ECO:0000255" key="1">
    <source>
        <dbReference type="HAMAP-Rule" id="MF_00090"/>
    </source>
</evidence>
<reference key="1">
    <citation type="journal article" date="2002" name="Nature">
        <title>Comparison of the genomes of two Xanthomonas pathogens with differing host specificities.</title>
        <authorList>
            <person name="da Silva A.C.R."/>
            <person name="Ferro J.A."/>
            <person name="Reinach F.C."/>
            <person name="Farah C.S."/>
            <person name="Furlan L.R."/>
            <person name="Quaggio R.B."/>
            <person name="Monteiro-Vitorello C.B."/>
            <person name="Van Sluys M.A."/>
            <person name="Almeida N.F. Jr."/>
            <person name="Alves L.M.C."/>
            <person name="do Amaral A.M."/>
            <person name="Bertolini M.C."/>
            <person name="Camargo L.E.A."/>
            <person name="Camarotte G."/>
            <person name="Cannavan F."/>
            <person name="Cardozo J."/>
            <person name="Chambergo F."/>
            <person name="Ciapina L.P."/>
            <person name="Cicarelli R.M.B."/>
            <person name="Coutinho L.L."/>
            <person name="Cursino-Santos J.R."/>
            <person name="El-Dorry H."/>
            <person name="Faria J.B."/>
            <person name="Ferreira A.J.S."/>
            <person name="Ferreira R.C.C."/>
            <person name="Ferro M.I.T."/>
            <person name="Formighieri E.F."/>
            <person name="Franco M.C."/>
            <person name="Greggio C.C."/>
            <person name="Gruber A."/>
            <person name="Katsuyama A.M."/>
            <person name="Kishi L.T."/>
            <person name="Leite R.P."/>
            <person name="Lemos E.G.M."/>
            <person name="Lemos M.V.F."/>
            <person name="Locali E.C."/>
            <person name="Machado M.A."/>
            <person name="Madeira A.M.B.N."/>
            <person name="Martinez-Rossi N.M."/>
            <person name="Martins E.C."/>
            <person name="Meidanis J."/>
            <person name="Menck C.F.M."/>
            <person name="Miyaki C.Y."/>
            <person name="Moon D.H."/>
            <person name="Moreira L.M."/>
            <person name="Novo M.T.M."/>
            <person name="Okura V.K."/>
            <person name="Oliveira M.C."/>
            <person name="Oliveira V.R."/>
            <person name="Pereira H.A."/>
            <person name="Rossi A."/>
            <person name="Sena J.A.D."/>
            <person name="Silva C."/>
            <person name="de Souza R.F."/>
            <person name="Spinola L.A.F."/>
            <person name="Takita M.A."/>
            <person name="Tamura R.E."/>
            <person name="Teixeira E.C."/>
            <person name="Tezza R.I.D."/>
            <person name="Trindade dos Santos M."/>
            <person name="Truffi D."/>
            <person name="Tsai S.M."/>
            <person name="White F.F."/>
            <person name="Setubal J.C."/>
            <person name="Kitajima J.P."/>
        </authorList>
    </citation>
    <scope>NUCLEOTIDE SEQUENCE [LARGE SCALE GENOMIC DNA]</scope>
    <source>
        <strain>306</strain>
    </source>
</reference>
<proteinExistence type="inferred from homology"/>
<feature type="chain" id="PRO_0000351951" description="Protein-L-isoaspartate O-methyltransferase">
    <location>
        <begin position="1"/>
        <end position="225"/>
    </location>
</feature>
<feature type="active site" evidence="1">
    <location>
        <position position="75"/>
    </location>
</feature>
<organism>
    <name type="scientific">Xanthomonas axonopodis pv. citri (strain 306)</name>
    <dbReference type="NCBI Taxonomy" id="190486"/>
    <lineage>
        <taxon>Bacteria</taxon>
        <taxon>Pseudomonadati</taxon>
        <taxon>Pseudomonadota</taxon>
        <taxon>Gammaproteobacteria</taxon>
        <taxon>Lysobacterales</taxon>
        <taxon>Lysobacteraceae</taxon>
        <taxon>Xanthomonas</taxon>
    </lineage>
</organism>
<dbReference type="EC" id="2.1.1.77" evidence="1"/>
<dbReference type="EMBL" id="AE008923">
    <property type="protein sequence ID" value="AAM36593.1"/>
    <property type="molecule type" value="Genomic_DNA"/>
</dbReference>
<dbReference type="RefSeq" id="WP_003481841.1">
    <property type="nucleotide sequence ID" value="NC_003919.1"/>
</dbReference>
<dbReference type="SMR" id="Q8PLR3"/>
<dbReference type="KEGG" id="xac:XAC1726"/>
<dbReference type="eggNOG" id="COG2518">
    <property type="taxonomic scope" value="Bacteria"/>
</dbReference>
<dbReference type="HOGENOM" id="CLU_055432_2_0_6"/>
<dbReference type="Proteomes" id="UP000000576">
    <property type="component" value="Chromosome"/>
</dbReference>
<dbReference type="GO" id="GO:0005737">
    <property type="term" value="C:cytoplasm"/>
    <property type="evidence" value="ECO:0007669"/>
    <property type="project" value="UniProtKB-SubCell"/>
</dbReference>
<dbReference type="GO" id="GO:0004719">
    <property type="term" value="F:protein-L-isoaspartate (D-aspartate) O-methyltransferase activity"/>
    <property type="evidence" value="ECO:0007669"/>
    <property type="project" value="UniProtKB-UniRule"/>
</dbReference>
<dbReference type="GO" id="GO:0032259">
    <property type="term" value="P:methylation"/>
    <property type="evidence" value="ECO:0007669"/>
    <property type="project" value="UniProtKB-KW"/>
</dbReference>
<dbReference type="GO" id="GO:0036211">
    <property type="term" value="P:protein modification process"/>
    <property type="evidence" value="ECO:0007669"/>
    <property type="project" value="UniProtKB-UniRule"/>
</dbReference>
<dbReference type="GO" id="GO:0030091">
    <property type="term" value="P:protein repair"/>
    <property type="evidence" value="ECO:0007669"/>
    <property type="project" value="UniProtKB-UniRule"/>
</dbReference>
<dbReference type="CDD" id="cd02440">
    <property type="entry name" value="AdoMet_MTases"/>
    <property type="match status" value="1"/>
</dbReference>
<dbReference type="FunFam" id="3.40.50.150:FF:000010">
    <property type="entry name" value="Protein-L-isoaspartate O-methyltransferase"/>
    <property type="match status" value="1"/>
</dbReference>
<dbReference type="Gene3D" id="3.40.50.150">
    <property type="entry name" value="Vaccinia Virus protein VP39"/>
    <property type="match status" value="1"/>
</dbReference>
<dbReference type="HAMAP" id="MF_00090">
    <property type="entry name" value="PIMT"/>
    <property type="match status" value="1"/>
</dbReference>
<dbReference type="InterPro" id="IPR000682">
    <property type="entry name" value="PCMT"/>
</dbReference>
<dbReference type="InterPro" id="IPR029063">
    <property type="entry name" value="SAM-dependent_MTases_sf"/>
</dbReference>
<dbReference type="NCBIfam" id="TIGR00080">
    <property type="entry name" value="pimt"/>
    <property type="match status" value="1"/>
</dbReference>
<dbReference type="NCBIfam" id="NF001453">
    <property type="entry name" value="PRK00312.1"/>
    <property type="match status" value="1"/>
</dbReference>
<dbReference type="PANTHER" id="PTHR11579">
    <property type="entry name" value="PROTEIN-L-ISOASPARTATE O-METHYLTRANSFERASE"/>
    <property type="match status" value="1"/>
</dbReference>
<dbReference type="PANTHER" id="PTHR11579:SF0">
    <property type="entry name" value="PROTEIN-L-ISOASPARTATE(D-ASPARTATE) O-METHYLTRANSFERASE"/>
    <property type="match status" value="1"/>
</dbReference>
<dbReference type="Pfam" id="PF01135">
    <property type="entry name" value="PCMT"/>
    <property type="match status" value="1"/>
</dbReference>
<dbReference type="SUPFAM" id="SSF53335">
    <property type="entry name" value="S-adenosyl-L-methionine-dependent methyltransferases"/>
    <property type="match status" value="1"/>
</dbReference>
<dbReference type="PROSITE" id="PS01279">
    <property type="entry name" value="PCMT"/>
    <property type="match status" value="1"/>
</dbReference>
<accession>Q8PLR3</accession>
<keyword id="KW-0963">Cytoplasm</keyword>
<keyword id="KW-0489">Methyltransferase</keyword>
<keyword id="KW-0949">S-adenosyl-L-methionine</keyword>
<keyword id="KW-0808">Transferase</keyword>
<sequence>MTPRLRLQPESVGIGMTSQRVRDRLVERLREAGIQDESTLNAMRTVPRHLFIDEALASRAYEDTALPIGHGQTISQPWVVARMTEAVLQVAPTKVLEVGTGSGYQGAILAALGLEVYTVERIGDLLRQARKRFRHLGMNVRSKHDDGRIGWPEHGPYDAIVVTAAAPALVDALIDQLAVGGRLVAPVGGASSQSLVQLTRGADGAIEQQVLAPVTFVPLLSGMLD</sequence>